<accession>B2RKW6</accession>
<proteinExistence type="inferred from homology"/>
<reference key="1">
    <citation type="journal article" date="2008" name="DNA Res.">
        <title>Determination of the genome sequence of Porphyromonas gingivalis strain ATCC 33277 and genomic comparison with strain W83 revealed extensive genome rearrangements in P. gingivalis.</title>
        <authorList>
            <person name="Naito M."/>
            <person name="Hirakawa H."/>
            <person name="Yamashita A."/>
            <person name="Ohara N."/>
            <person name="Shoji M."/>
            <person name="Yukitake H."/>
            <person name="Nakayama K."/>
            <person name="Toh H."/>
            <person name="Yoshimura F."/>
            <person name="Kuhara S."/>
            <person name="Hattori M."/>
            <person name="Hayashi T."/>
            <person name="Nakayama K."/>
        </authorList>
    </citation>
    <scope>NUCLEOTIDE SEQUENCE [LARGE SCALE GENOMIC DNA]</scope>
    <source>
        <strain>ATCC 33277 / DSM 20709 / CIP 103683 / JCM 12257 / NCTC 11834 / 2561</strain>
    </source>
</reference>
<keyword id="KW-0067">ATP-binding</keyword>
<keyword id="KW-0963">Cytoplasm</keyword>
<keyword id="KW-0436">Ligase</keyword>
<keyword id="KW-0547">Nucleotide-binding</keyword>
<keyword id="KW-0566">Pantothenate biosynthesis</keyword>
<name>PANC_PORG3</name>
<sequence length="281" mass="31179">MEIFNTVASLKNFVAHARAERKTIGLVPTMGALHRGHISLIHRAVAECDICVASVFVNPTQFNDKRDLECYPRTPEADAAVLAEAGCHAVFMPSVEEVYPEPDTRVFDLGSVAEVMEGKHRPGHFNGVAQVVSKLFMMVEPDKAYFGEKDFQQIAVIRSMVNLLGLPVTIVACPIIREEDGLALSSRNVRLGSEERAIAPSIARILGQSRTLRPAHTPEAVTRWVTESLNALPHLQVEYFEIVDGNSLQRIDNWQDTDHAVGCITVYCGEVRLIDNIKYED</sequence>
<gene>
    <name evidence="1" type="primary">panC</name>
    <name type="ordered locus">PGN_1492</name>
</gene>
<protein>
    <recommendedName>
        <fullName evidence="1">Pantothenate synthetase</fullName>
        <shortName evidence="1">PS</shortName>
        <ecNumber evidence="1">6.3.2.1</ecNumber>
    </recommendedName>
    <alternativeName>
        <fullName evidence="1">Pantoate--beta-alanine ligase</fullName>
    </alternativeName>
    <alternativeName>
        <fullName evidence="1">Pantoate-activating enzyme</fullName>
    </alternativeName>
</protein>
<feature type="chain" id="PRO_1000097087" description="Pantothenate synthetase">
    <location>
        <begin position="1"/>
        <end position="281"/>
    </location>
</feature>
<feature type="active site" description="Proton donor" evidence="1">
    <location>
        <position position="37"/>
    </location>
</feature>
<feature type="binding site" evidence="1">
    <location>
        <begin position="30"/>
        <end position="37"/>
    </location>
    <ligand>
        <name>ATP</name>
        <dbReference type="ChEBI" id="CHEBI:30616"/>
    </ligand>
</feature>
<feature type="binding site" evidence="1">
    <location>
        <position position="61"/>
    </location>
    <ligand>
        <name>(R)-pantoate</name>
        <dbReference type="ChEBI" id="CHEBI:15980"/>
    </ligand>
</feature>
<feature type="binding site" evidence="1">
    <location>
        <position position="61"/>
    </location>
    <ligand>
        <name>beta-alanine</name>
        <dbReference type="ChEBI" id="CHEBI:57966"/>
    </ligand>
</feature>
<feature type="binding site" evidence="1">
    <location>
        <begin position="147"/>
        <end position="150"/>
    </location>
    <ligand>
        <name>ATP</name>
        <dbReference type="ChEBI" id="CHEBI:30616"/>
    </ligand>
</feature>
<feature type="binding site" evidence="1">
    <location>
        <position position="153"/>
    </location>
    <ligand>
        <name>(R)-pantoate</name>
        <dbReference type="ChEBI" id="CHEBI:15980"/>
    </ligand>
</feature>
<feature type="binding site" evidence="1">
    <location>
        <position position="176"/>
    </location>
    <ligand>
        <name>ATP</name>
        <dbReference type="ChEBI" id="CHEBI:30616"/>
    </ligand>
</feature>
<feature type="binding site" evidence="1">
    <location>
        <begin position="184"/>
        <end position="187"/>
    </location>
    <ligand>
        <name>ATP</name>
        <dbReference type="ChEBI" id="CHEBI:30616"/>
    </ligand>
</feature>
<comment type="function">
    <text evidence="1">Catalyzes the condensation of pantoate with beta-alanine in an ATP-dependent reaction via a pantoyl-adenylate intermediate.</text>
</comment>
<comment type="catalytic activity">
    <reaction evidence="1">
        <text>(R)-pantoate + beta-alanine + ATP = (R)-pantothenate + AMP + diphosphate + H(+)</text>
        <dbReference type="Rhea" id="RHEA:10912"/>
        <dbReference type="ChEBI" id="CHEBI:15378"/>
        <dbReference type="ChEBI" id="CHEBI:15980"/>
        <dbReference type="ChEBI" id="CHEBI:29032"/>
        <dbReference type="ChEBI" id="CHEBI:30616"/>
        <dbReference type="ChEBI" id="CHEBI:33019"/>
        <dbReference type="ChEBI" id="CHEBI:57966"/>
        <dbReference type="ChEBI" id="CHEBI:456215"/>
        <dbReference type="EC" id="6.3.2.1"/>
    </reaction>
</comment>
<comment type="pathway">
    <text evidence="1">Cofactor biosynthesis; (R)-pantothenate biosynthesis; (R)-pantothenate from (R)-pantoate and beta-alanine: step 1/1.</text>
</comment>
<comment type="subunit">
    <text evidence="1">Homodimer.</text>
</comment>
<comment type="subcellular location">
    <subcellularLocation>
        <location evidence="1">Cytoplasm</location>
    </subcellularLocation>
</comment>
<comment type="miscellaneous">
    <text evidence="1">The reaction proceeds by a bi uni uni bi ping pong mechanism.</text>
</comment>
<comment type="similarity">
    <text evidence="1">Belongs to the pantothenate synthetase family.</text>
</comment>
<evidence type="ECO:0000255" key="1">
    <source>
        <dbReference type="HAMAP-Rule" id="MF_00158"/>
    </source>
</evidence>
<dbReference type="EC" id="6.3.2.1" evidence="1"/>
<dbReference type="EMBL" id="AP009380">
    <property type="protein sequence ID" value="BAG34011.1"/>
    <property type="molecule type" value="Genomic_DNA"/>
</dbReference>
<dbReference type="RefSeq" id="WP_012458314.1">
    <property type="nucleotide sequence ID" value="NC_010729.1"/>
</dbReference>
<dbReference type="SMR" id="B2RKW6"/>
<dbReference type="GeneID" id="29256672"/>
<dbReference type="KEGG" id="pgn:PGN_1492"/>
<dbReference type="eggNOG" id="COG0414">
    <property type="taxonomic scope" value="Bacteria"/>
</dbReference>
<dbReference type="HOGENOM" id="CLU_047148_0_0_10"/>
<dbReference type="OrthoDB" id="9773087at2"/>
<dbReference type="BioCyc" id="PGIN431947:G1G2V-1693-MONOMER"/>
<dbReference type="UniPathway" id="UPA00028">
    <property type="reaction ID" value="UER00005"/>
</dbReference>
<dbReference type="Proteomes" id="UP000008842">
    <property type="component" value="Chromosome"/>
</dbReference>
<dbReference type="GO" id="GO:0005829">
    <property type="term" value="C:cytosol"/>
    <property type="evidence" value="ECO:0007669"/>
    <property type="project" value="TreeGrafter"/>
</dbReference>
<dbReference type="GO" id="GO:0005524">
    <property type="term" value="F:ATP binding"/>
    <property type="evidence" value="ECO:0007669"/>
    <property type="project" value="UniProtKB-KW"/>
</dbReference>
<dbReference type="GO" id="GO:0004592">
    <property type="term" value="F:pantoate-beta-alanine ligase activity"/>
    <property type="evidence" value="ECO:0007669"/>
    <property type="project" value="UniProtKB-UniRule"/>
</dbReference>
<dbReference type="GO" id="GO:0015940">
    <property type="term" value="P:pantothenate biosynthetic process"/>
    <property type="evidence" value="ECO:0007669"/>
    <property type="project" value="UniProtKB-UniRule"/>
</dbReference>
<dbReference type="CDD" id="cd00560">
    <property type="entry name" value="PanC"/>
    <property type="match status" value="1"/>
</dbReference>
<dbReference type="FunFam" id="3.40.50.620:FF:000013">
    <property type="entry name" value="Pantothenate synthetase"/>
    <property type="match status" value="1"/>
</dbReference>
<dbReference type="Gene3D" id="3.40.50.620">
    <property type="entry name" value="HUPs"/>
    <property type="match status" value="1"/>
</dbReference>
<dbReference type="Gene3D" id="3.30.1300.10">
    <property type="entry name" value="Pantoate-beta-alanine ligase, C-terminal domain"/>
    <property type="match status" value="1"/>
</dbReference>
<dbReference type="HAMAP" id="MF_00158">
    <property type="entry name" value="PanC"/>
    <property type="match status" value="1"/>
</dbReference>
<dbReference type="InterPro" id="IPR003721">
    <property type="entry name" value="Pantoate_ligase"/>
</dbReference>
<dbReference type="InterPro" id="IPR042176">
    <property type="entry name" value="Pantoate_ligase_C"/>
</dbReference>
<dbReference type="InterPro" id="IPR014729">
    <property type="entry name" value="Rossmann-like_a/b/a_fold"/>
</dbReference>
<dbReference type="NCBIfam" id="TIGR00018">
    <property type="entry name" value="panC"/>
    <property type="match status" value="1"/>
</dbReference>
<dbReference type="PANTHER" id="PTHR21299">
    <property type="entry name" value="CYTIDYLATE KINASE/PANTOATE-BETA-ALANINE LIGASE"/>
    <property type="match status" value="1"/>
</dbReference>
<dbReference type="PANTHER" id="PTHR21299:SF1">
    <property type="entry name" value="PANTOATE--BETA-ALANINE LIGASE"/>
    <property type="match status" value="1"/>
</dbReference>
<dbReference type="Pfam" id="PF02569">
    <property type="entry name" value="Pantoate_ligase"/>
    <property type="match status" value="1"/>
</dbReference>
<dbReference type="SUPFAM" id="SSF52374">
    <property type="entry name" value="Nucleotidylyl transferase"/>
    <property type="match status" value="1"/>
</dbReference>
<organism>
    <name type="scientific">Porphyromonas gingivalis (strain ATCC 33277 / DSM 20709 / CIP 103683 / JCM 12257 / NCTC 11834 / 2561)</name>
    <dbReference type="NCBI Taxonomy" id="431947"/>
    <lineage>
        <taxon>Bacteria</taxon>
        <taxon>Pseudomonadati</taxon>
        <taxon>Bacteroidota</taxon>
        <taxon>Bacteroidia</taxon>
        <taxon>Bacteroidales</taxon>
        <taxon>Porphyromonadaceae</taxon>
        <taxon>Porphyromonas</taxon>
    </lineage>
</organism>